<organism>
    <name type="scientific">Zea mays</name>
    <name type="common">Maize</name>
    <dbReference type="NCBI Taxonomy" id="4577"/>
    <lineage>
        <taxon>Eukaryota</taxon>
        <taxon>Viridiplantae</taxon>
        <taxon>Streptophyta</taxon>
        <taxon>Embryophyta</taxon>
        <taxon>Tracheophyta</taxon>
        <taxon>Spermatophyta</taxon>
        <taxon>Magnoliopsida</taxon>
        <taxon>Liliopsida</taxon>
        <taxon>Poales</taxon>
        <taxon>Poaceae</taxon>
        <taxon>PACMAD clade</taxon>
        <taxon>Panicoideae</taxon>
        <taxon>Andropogonodae</taxon>
        <taxon>Andropogoneae</taxon>
        <taxon>Tripsacinae</taxon>
        <taxon>Zea</taxon>
    </lineage>
</organism>
<keyword id="KW-1185">Reference proteome</keyword>
<keyword id="KW-0708">Seed storage protein</keyword>
<keyword id="KW-0732">Signal</keyword>
<keyword id="KW-0758">Storage protein</keyword>
<name>ZEAYW_MAIZE</name>
<protein>
    <recommendedName>
        <fullName evidence="3">22 kDa alpha-zein 8</fullName>
    </recommendedName>
    <alternativeName>
        <fullName evidence="4">22 kDa zein ZA1/M1</fullName>
    </alternativeName>
    <alternativeName>
        <fullName evidence="4">Zein-alpha ZA1/M1</fullName>
    </alternativeName>
</protein>
<gene>
    <name evidence="3" type="primary">AZS22-8</name>
</gene>
<accession>P04699</accession>
<reference key="1">
    <citation type="journal article" date="1982" name="EMBO J.">
        <title>A homologous repetitive block structure underlies the heterogeneity of heavy and light chain zein genes.</title>
        <authorList>
            <person name="Spena A."/>
            <person name="Viotti A."/>
            <person name="Pirrotta V."/>
        </authorList>
    </citation>
    <scope>NUCLEOTIDE SEQUENCE [GENOMIC DNA]</scope>
    <source>
        <strain>cv. Wisconsin 64A</strain>
    </source>
</reference>
<reference key="2">
    <citation type="submission" date="1983-04" db="EMBL/GenBank/DDBJ databases">
        <authorList>
            <person name="Spena A."/>
        </authorList>
    </citation>
    <scope>NUCLEOTIDE SEQUENCE [GENOMIC DNA]</scope>
    <source>
        <strain>cv. Wisconsin 64A</strain>
    </source>
</reference>
<reference key="3">
    <citation type="journal article" date="1985" name="EMBO J.">
        <title>Each zein gene class can produce polypeptides of different sizes.</title>
        <authorList>
            <person name="Viotti A."/>
            <person name="Cairo G."/>
            <person name="Vitale A."/>
            <person name="Sala E."/>
        </authorList>
    </citation>
    <scope>NUCLEOTIDE SEQUENCE [GENOMIC DNA]</scope>
    <source>
        <strain>cv. Wisconsin 64A</strain>
    </source>
</reference>
<reference key="4">
    <citation type="journal article" date="2001" name="Genome Res.">
        <title>Sequence, regulation, and evolution of the maize 22-kD alpha zein gene family.</title>
        <authorList>
            <person name="Song R."/>
            <person name="Llaca V."/>
            <person name="Linton E."/>
            <person name="Messing J."/>
        </authorList>
    </citation>
    <scope>GENE FAMILY</scope>
    <scope>NOMENCLATURE</scope>
</reference>
<feature type="signal peptide" evidence="2">
    <location>
        <begin position="1"/>
        <end position="21"/>
    </location>
</feature>
<feature type="chain" id="PRO_0000041627" description="22 kDa alpha-zein 8" evidence="2">
    <location>
        <begin position="22"/>
        <end position="266"/>
    </location>
</feature>
<comment type="function">
    <text evidence="5">Zeins are major seed storage proteins.</text>
</comment>
<comment type="miscellaneous">
    <text>The alpha zeins of 19 kDa and 22 kDa account for 70% of the total zein fraction. They are encoded by a large multigene family.</text>
</comment>
<comment type="miscellaneous">
    <text evidence="1">Structurally, 22K and 19K zeins are composed of nine adjacent, topologically antiparallel helices clustered within a distorted cylinder.</text>
</comment>
<comment type="similarity">
    <text evidence="5">Belongs to the zein family.</text>
</comment>
<sequence>MATKILALLALLALFVSATNAFIIPQCSLAPSAIIPQFLPPVTSMGFEHLAVQAYRLQQALAASVLQQPINQLQQQSLAHLTIQTIATQQQQQFLPALSQLDVVNPVAYLQQQLLASNPLALANVAAYQQQQQLQQFLPALSQLAMVNPAAYLQQQQLLSSSPLAVGNAPTYLQQQLLQQIVPALTQLAVANPAAYLQQLLPFNQLTVSNSAAYLQQRQQLLNPLEVPNPLVAAFLQQQQLLPYSQFSLMNPALSWQQPIVGGAIF</sequence>
<dbReference type="EMBL" id="V01475">
    <property type="protein sequence ID" value="CAA24722.1"/>
    <property type="molecule type" value="Genomic_DNA"/>
</dbReference>
<dbReference type="PIR" id="B22831">
    <property type="entry name" value="B22831"/>
</dbReference>
<dbReference type="STRING" id="4577.P04699"/>
<dbReference type="MaizeGDB" id="58096"/>
<dbReference type="InParanoid" id="P04699"/>
<dbReference type="Proteomes" id="UP000007305">
    <property type="component" value="Unplaced"/>
</dbReference>
<dbReference type="ExpressionAtlas" id="P04699">
    <property type="expression patterns" value="baseline and differential"/>
</dbReference>
<dbReference type="GO" id="GO:0045735">
    <property type="term" value="F:nutrient reservoir activity"/>
    <property type="evidence" value="ECO:0007669"/>
    <property type="project" value="UniProtKB-KW"/>
</dbReference>
<dbReference type="InterPro" id="IPR051529">
    <property type="entry name" value="Seed_Storage_Prolamin"/>
</dbReference>
<dbReference type="InterPro" id="IPR002530">
    <property type="entry name" value="Zein"/>
</dbReference>
<dbReference type="PANTHER" id="PTHR48199">
    <property type="entry name" value="ALPHA KAFIRIN"/>
    <property type="match status" value="1"/>
</dbReference>
<dbReference type="PANTHER" id="PTHR48199:SF1">
    <property type="entry name" value="ALPHA KAFIRIN"/>
    <property type="match status" value="1"/>
</dbReference>
<dbReference type="Pfam" id="PF01559">
    <property type="entry name" value="Zein"/>
    <property type="match status" value="1"/>
</dbReference>
<proteinExistence type="inferred from homology"/>
<evidence type="ECO:0000250" key="1">
    <source>
        <dbReference type="UniProtKB" id="P04698"/>
    </source>
</evidence>
<evidence type="ECO:0000255" key="2"/>
<evidence type="ECO:0000303" key="3">
    <source>
    </source>
</evidence>
<evidence type="ECO:0000303" key="4">
    <source>
    </source>
</evidence>
<evidence type="ECO:0000305" key="5"/>